<organism>
    <name type="scientific">Bos taurus</name>
    <name type="common">Bovine</name>
    <dbReference type="NCBI Taxonomy" id="9913"/>
    <lineage>
        <taxon>Eukaryota</taxon>
        <taxon>Metazoa</taxon>
        <taxon>Chordata</taxon>
        <taxon>Craniata</taxon>
        <taxon>Vertebrata</taxon>
        <taxon>Euteleostomi</taxon>
        <taxon>Mammalia</taxon>
        <taxon>Eutheria</taxon>
        <taxon>Laurasiatheria</taxon>
        <taxon>Artiodactyla</taxon>
        <taxon>Ruminantia</taxon>
        <taxon>Pecora</taxon>
        <taxon>Bovidae</taxon>
        <taxon>Bovinae</taxon>
        <taxon>Bos</taxon>
    </lineage>
</organism>
<evidence type="ECO:0000250" key="1"/>
<evidence type="ECO:0000305" key="2"/>
<name>COG6_BOVIN</name>
<dbReference type="EMBL" id="BC102837">
    <property type="protein sequence ID" value="AAI02838.1"/>
    <property type="molecule type" value="mRNA"/>
</dbReference>
<dbReference type="RefSeq" id="NP_001030241.1">
    <property type="nucleotide sequence ID" value="NM_001035069.2"/>
</dbReference>
<dbReference type="SMR" id="Q3SZI7"/>
<dbReference type="CORUM" id="Q3SZI7"/>
<dbReference type="FunCoup" id="Q3SZI7">
    <property type="interactions" value="3299"/>
</dbReference>
<dbReference type="STRING" id="9913.ENSBTAP00000022131"/>
<dbReference type="PaxDb" id="9913-ENSBTAP00000022131"/>
<dbReference type="GeneID" id="509305"/>
<dbReference type="KEGG" id="bta:509305"/>
<dbReference type="CTD" id="57511"/>
<dbReference type="eggNOG" id="KOG3758">
    <property type="taxonomic scope" value="Eukaryota"/>
</dbReference>
<dbReference type="InParanoid" id="Q3SZI7"/>
<dbReference type="OrthoDB" id="272987at2759"/>
<dbReference type="Proteomes" id="UP000009136">
    <property type="component" value="Unplaced"/>
</dbReference>
<dbReference type="GO" id="GO:0000139">
    <property type="term" value="C:Golgi membrane"/>
    <property type="evidence" value="ECO:0007669"/>
    <property type="project" value="UniProtKB-SubCell"/>
</dbReference>
<dbReference type="GO" id="GO:0017119">
    <property type="term" value="C:Golgi transport complex"/>
    <property type="evidence" value="ECO:0000318"/>
    <property type="project" value="GO_Central"/>
</dbReference>
<dbReference type="GO" id="GO:0070085">
    <property type="term" value="P:glycosylation"/>
    <property type="evidence" value="ECO:0000250"/>
    <property type="project" value="UniProtKB"/>
</dbReference>
<dbReference type="GO" id="GO:0006891">
    <property type="term" value="P:intra-Golgi vesicle-mediated transport"/>
    <property type="evidence" value="ECO:0000318"/>
    <property type="project" value="GO_Central"/>
</dbReference>
<dbReference type="GO" id="GO:0015031">
    <property type="term" value="P:protein transport"/>
    <property type="evidence" value="ECO:0007669"/>
    <property type="project" value="UniProtKB-KW"/>
</dbReference>
<dbReference type="InterPro" id="IPR010490">
    <property type="entry name" value="COG6"/>
</dbReference>
<dbReference type="InterPro" id="IPR048369">
    <property type="entry name" value="COG6_C"/>
</dbReference>
<dbReference type="InterPro" id="IPR048368">
    <property type="entry name" value="COG6_N"/>
</dbReference>
<dbReference type="PANTHER" id="PTHR21506">
    <property type="entry name" value="COMPONENT OF OLIGOMERIC GOLGI COMPLEX 6"/>
    <property type="match status" value="1"/>
</dbReference>
<dbReference type="PANTHER" id="PTHR21506:SF0">
    <property type="entry name" value="CONSERVED OLIGOMERIC GOLGI COMPLEX SUBUNIT 6"/>
    <property type="match status" value="1"/>
</dbReference>
<dbReference type="Pfam" id="PF20653">
    <property type="entry name" value="COG6_C"/>
    <property type="match status" value="1"/>
</dbReference>
<dbReference type="Pfam" id="PF06419">
    <property type="entry name" value="COG6_N"/>
    <property type="match status" value="1"/>
</dbReference>
<dbReference type="SMART" id="SM01087">
    <property type="entry name" value="COG6"/>
    <property type="match status" value="1"/>
</dbReference>
<keyword id="KW-0333">Golgi apparatus</keyword>
<keyword id="KW-0472">Membrane</keyword>
<keyword id="KW-0653">Protein transport</keyword>
<keyword id="KW-1185">Reference proteome</keyword>
<keyword id="KW-0813">Transport</keyword>
<reference key="1">
    <citation type="submission" date="2005-08" db="EMBL/GenBank/DDBJ databases">
        <authorList>
            <consortium name="NIH - Mammalian Gene Collection (MGC) project"/>
        </authorList>
    </citation>
    <scope>NUCLEOTIDE SEQUENCE [LARGE SCALE MRNA]</scope>
    <source>
        <strain>Crossbred X Angus</strain>
        <tissue>Ileum</tissue>
    </source>
</reference>
<protein>
    <recommendedName>
        <fullName>Conserved oligomeric Golgi complex subunit 6</fullName>
        <shortName>COG complex subunit 6</shortName>
    </recommendedName>
    <alternativeName>
        <fullName>Component of oligomeric Golgi complex 6</fullName>
    </alternativeName>
</protein>
<comment type="function">
    <text evidence="1">Required for normal Golgi function.</text>
</comment>
<comment type="subunit">
    <text evidence="1">Component of the conserved oligomeric Golgi complex which is composed of eight different subunits and is required for normal Golgi morphology and localization.</text>
</comment>
<comment type="subcellular location">
    <subcellularLocation>
        <location evidence="1">Golgi apparatus membrane</location>
        <topology evidence="1">Peripheral membrane protein</topology>
    </subcellularLocation>
</comment>
<comment type="similarity">
    <text evidence="2">Belongs to the COG6 family.</text>
</comment>
<accession>Q3SZI7</accession>
<proteinExistence type="evidence at transcript level"/>
<feature type="chain" id="PRO_0000328217" description="Conserved oligomeric Golgi complex subunit 6">
    <location>
        <begin position="1"/>
        <end position="657"/>
    </location>
</feature>
<gene>
    <name type="primary">COG6</name>
</gene>
<sequence>MAEGSGEVVVVPATGAANGLNNGAGGTSAQTSNPLSRKLRKILDTRLDNDKDMLEALKALSTFFVENSLRTRRNLRGDIERRSLAINEEFVSIFKEVKEELESIHEDVQAMSSCCQDMTSRLQAAKEQTQDLIVKTTKLQAESQRLEIRAQVADAFLSKFQLTSDEMSLLRGTREGPITEDFFKALGRVKQIHNDVKVLLRTNQQTAGLEIMEQMALLQETSYERLYRWAQSECRTLTQESCDISPVLTQAMEALQDRPVLYKYTLDEFGTARRSTVVRGFIDALTRGGPGGTPRPIEMHSHDPLRYVGDMLAWLHQATASEKEHLEALLKHVTAQGVEENIQEVVGHITEGVCRPLKVRIEQVIVAEPGAVLLYKISNLLKFYHHTISGIIGNSATTLLTTIEEMHLLSKKIFFNSLSLHASKLMDKVELPPPDLGPSSALNQTLVLLREVLASHDSSVVPLDARQADFVQVLSCVLDPLLQMCTVSASHLGTADMATFMVNSLYMMKTTLALFEFTDRRLEMLQFQIEAHLDTLINEQASYVLTRAGLSYIYNMVQQHKVEQGPLANLPNLDSVALKAAMVQFDRYLSAPDNLLMPQLNFLLSATVKEQIIKQSTELVCRAYGEVYAAVMNPVNEYKDPGSILHRSPQQVQTLLS</sequence>